<protein>
    <recommendedName>
        <fullName>Uncharacterized HTH-type transcriptional regulator in ibpB-leuC intergenic region</fullName>
    </recommendedName>
</protein>
<name>YIBL_AZOVI</name>
<evidence type="ECO:0000255" key="1">
    <source>
        <dbReference type="PROSITE-ProRule" id="PRU00253"/>
    </source>
</evidence>
<evidence type="ECO:0000305" key="2"/>
<accession>P96194</accession>
<sequence>MDLASLNAFIAVAETGSFSEAGERLHLTQPAVSKRIAALEQQLQVRLFDRLGREVRLTEAGRALLPRAYRILSVLEDTRRALNNLNGDVSGRLTLATSHHIGLHRLPPCCAPSPAPIRRWRWTSASSIRKWPTRRSCTAAPSWR</sequence>
<comment type="similarity">
    <text evidence="2">Belongs to the LysR transcriptional regulatory family.</text>
</comment>
<organism>
    <name type="scientific">Azotobacter vinelandii</name>
    <dbReference type="NCBI Taxonomy" id="354"/>
    <lineage>
        <taxon>Bacteria</taxon>
        <taxon>Pseudomonadati</taxon>
        <taxon>Pseudomonadota</taxon>
        <taxon>Gammaproteobacteria</taxon>
        <taxon>Pseudomonadales</taxon>
        <taxon>Pseudomonadaceae</taxon>
        <taxon>Azotobacter</taxon>
    </lineage>
</organism>
<reference key="1">
    <citation type="journal article" date="1997" name="Mol. Gen. Genet.">
        <title>Characterization and mutagenesis of the leucine biosynthetic genes of Azotobacter vinelandii: an analysis of the rarity of amino acid auxotrophs.</title>
        <authorList>
            <person name="Manna A.C."/>
            <person name="Das H.K."/>
        </authorList>
    </citation>
    <scope>NUCLEOTIDE SEQUENCE [GENOMIC DNA]</scope>
    <source>
        <strain>ATCC 13705 / OP1 / DSM 366 / NCIMB 11614 / LMG 3878 / UW</strain>
    </source>
</reference>
<feature type="chain" id="PRO_0000105829" description="Uncharacterized HTH-type transcriptional regulator in ibpB-leuC intergenic region">
    <location>
        <begin position="1"/>
        <end position="144"/>
    </location>
</feature>
<feature type="domain" description="HTH lysR-type" evidence="1">
    <location>
        <begin position="1"/>
        <end position="58"/>
    </location>
</feature>
<feature type="DNA-binding region" description="H-T-H motif" evidence="1">
    <location>
        <begin position="18"/>
        <end position="38"/>
    </location>
</feature>
<keyword id="KW-0238">DNA-binding</keyword>
<keyword id="KW-0804">Transcription</keyword>
<keyword id="KW-0805">Transcription regulation</keyword>
<dbReference type="EMBL" id="Y11280">
    <property type="protein sequence ID" value="CAA72148.1"/>
    <property type="molecule type" value="Genomic_DNA"/>
</dbReference>
<dbReference type="SMR" id="P96194"/>
<dbReference type="GO" id="GO:0003700">
    <property type="term" value="F:DNA-binding transcription factor activity"/>
    <property type="evidence" value="ECO:0007669"/>
    <property type="project" value="InterPro"/>
</dbReference>
<dbReference type="GO" id="GO:0000976">
    <property type="term" value="F:transcription cis-regulatory region binding"/>
    <property type="evidence" value="ECO:0007669"/>
    <property type="project" value="TreeGrafter"/>
</dbReference>
<dbReference type="FunFam" id="1.10.10.10:FF:000001">
    <property type="entry name" value="LysR family transcriptional regulator"/>
    <property type="match status" value="1"/>
</dbReference>
<dbReference type="Gene3D" id="1.10.10.10">
    <property type="entry name" value="Winged helix-like DNA-binding domain superfamily/Winged helix DNA-binding domain"/>
    <property type="match status" value="1"/>
</dbReference>
<dbReference type="InterPro" id="IPR000847">
    <property type="entry name" value="Tscrpt_reg_HTH_LysR"/>
</dbReference>
<dbReference type="InterPro" id="IPR036388">
    <property type="entry name" value="WH-like_DNA-bd_sf"/>
</dbReference>
<dbReference type="InterPro" id="IPR036390">
    <property type="entry name" value="WH_DNA-bd_sf"/>
</dbReference>
<dbReference type="PANTHER" id="PTHR30126">
    <property type="entry name" value="HTH-TYPE TRANSCRIPTIONAL REGULATOR"/>
    <property type="match status" value="1"/>
</dbReference>
<dbReference type="PANTHER" id="PTHR30126:SF81">
    <property type="entry name" value="HTH-TYPE TRANSCRIPTIONAL REGULATOR ILVY"/>
    <property type="match status" value="1"/>
</dbReference>
<dbReference type="Pfam" id="PF00126">
    <property type="entry name" value="HTH_1"/>
    <property type="match status" value="1"/>
</dbReference>
<dbReference type="PRINTS" id="PR00039">
    <property type="entry name" value="HTHLYSR"/>
</dbReference>
<dbReference type="SUPFAM" id="SSF46785">
    <property type="entry name" value="Winged helix' DNA-binding domain"/>
    <property type="match status" value="1"/>
</dbReference>
<dbReference type="PROSITE" id="PS50931">
    <property type="entry name" value="HTH_LYSR"/>
    <property type="match status" value="1"/>
</dbReference>
<proteinExistence type="inferred from homology"/>